<keyword id="KW-0032">Aminotransferase</keyword>
<keyword id="KW-0045">Antibiotic biosynthesis</keyword>
<keyword id="KW-0663">Pyridoxal phosphate</keyword>
<keyword id="KW-1185">Reference proteome</keyword>
<keyword id="KW-0808">Transferase</keyword>
<gene>
    <name evidence="8" type="primary">lat</name>
    <name evidence="17" type="ORF">SCLAV_4201</name>
</gene>
<organism>
    <name type="scientific">Streptomyces clavuligerus</name>
    <dbReference type="NCBI Taxonomy" id="1901"/>
    <lineage>
        <taxon>Bacteria</taxon>
        <taxon>Bacillati</taxon>
        <taxon>Actinomycetota</taxon>
        <taxon>Actinomycetes</taxon>
        <taxon>Kitasatosporales</taxon>
        <taxon>Streptomycetaceae</taxon>
        <taxon>Streptomyces</taxon>
    </lineage>
</organism>
<accession>Q01767</accession>
<accession>B5GLC1</accession>
<accession>Q53823</accession>
<accession>Q5XPV2</accession>
<dbReference type="EC" id="2.6.1.36" evidence="3 4 5 6"/>
<dbReference type="EMBL" id="M64834">
    <property type="protein sequence ID" value="AAA26777.1"/>
    <property type="molecule type" value="Genomic_DNA"/>
</dbReference>
<dbReference type="EMBL" id="U12015">
    <property type="protein sequence ID" value="AAB39899.1"/>
    <property type="molecule type" value="Genomic_DNA"/>
</dbReference>
<dbReference type="EMBL" id="AY742798">
    <property type="protein sequence ID" value="AAU93525.1"/>
    <property type="molecule type" value="Genomic_DNA"/>
</dbReference>
<dbReference type="EMBL" id="CM000913">
    <property type="protein sequence ID" value="EFG09276.1"/>
    <property type="molecule type" value="Genomic_DNA"/>
</dbReference>
<dbReference type="PIR" id="A38169">
    <property type="entry name" value="A38169"/>
</dbReference>
<dbReference type="RefSeq" id="WP_003952504.1">
    <property type="nucleotide sequence ID" value="NZ_CM000913.1"/>
</dbReference>
<dbReference type="STRING" id="1901.BB341_07785"/>
<dbReference type="GeneID" id="93729320"/>
<dbReference type="KEGG" id="sclf:BB341_07785"/>
<dbReference type="eggNOG" id="COG0160">
    <property type="taxonomic scope" value="Bacteria"/>
</dbReference>
<dbReference type="OrthoDB" id="3699548at2"/>
<dbReference type="BioCyc" id="MetaCyc:MONOMER-12388"/>
<dbReference type="BRENDA" id="2.6.1.36">
    <property type="organism ID" value="5988"/>
</dbReference>
<dbReference type="UniPathway" id="UPA00183"/>
<dbReference type="Proteomes" id="UP000002357">
    <property type="component" value="Chromosome"/>
</dbReference>
<dbReference type="GO" id="GO:0045484">
    <property type="term" value="F:L-lysine 6-transaminase activity"/>
    <property type="evidence" value="ECO:0007669"/>
    <property type="project" value="UniProtKB-EC"/>
</dbReference>
<dbReference type="GO" id="GO:0030170">
    <property type="term" value="F:pyridoxal phosphate binding"/>
    <property type="evidence" value="ECO:0007669"/>
    <property type="project" value="InterPro"/>
</dbReference>
<dbReference type="GO" id="GO:0017000">
    <property type="term" value="P:antibiotic biosynthetic process"/>
    <property type="evidence" value="ECO:0007669"/>
    <property type="project" value="UniProtKB-KW"/>
</dbReference>
<dbReference type="GO" id="GO:0009450">
    <property type="term" value="P:gamma-aminobutyric acid catabolic process"/>
    <property type="evidence" value="ECO:0007669"/>
    <property type="project" value="TreeGrafter"/>
</dbReference>
<dbReference type="CDD" id="cd00610">
    <property type="entry name" value="OAT_like"/>
    <property type="match status" value="1"/>
</dbReference>
<dbReference type="Gene3D" id="3.90.1150.10">
    <property type="entry name" value="Aspartate Aminotransferase, domain 1"/>
    <property type="match status" value="1"/>
</dbReference>
<dbReference type="Gene3D" id="3.40.640.10">
    <property type="entry name" value="Type I PLP-dependent aspartate aminotransferase-like (Major domain)"/>
    <property type="match status" value="1"/>
</dbReference>
<dbReference type="InterPro" id="IPR005814">
    <property type="entry name" value="Aminotrans_3"/>
</dbReference>
<dbReference type="InterPro" id="IPR049704">
    <property type="entry name" value="Aminotrans_3_PPA_site"/>
</dbReference>
<dbReference type="InterPro" id="IPR017657">
    <property type="entry name" value="L-lysine_6-transaminase"/>
</dbReference>
<dbReference type="InterPro" id="IPR015424">
    <property type="entry name" value="PyrdxlP-dep_Trfase"/>
</dbReference>
<dbReference type="InterPro" id="IPR015421">
    <property type="entry name" value="PyrdxlP-dep_Trfase_major"/>
</dbReference>
<dbReference type="InterPro" id="IPR015422">
    <property type="entry name" value="PyrdxlP-dep_Trfase_small"/>
</dbReference>
<dbReference type="NCBIfam" id="TIGR03251">
    <property type="entry name" value="LAT_fam"/>
    <property type="match status" value="1"/>
</dbReference>
<dbReference type="PANTHER" id="PTHR43206:SF2">
    <property type="entry name" value="4-AMINOBUTYRATE AMINOTRANSFERASE GABT"/>
    <property type="match status" value="1"/>
</dbReference>
<dbReference type="PANTHER" id="PTHR43206">
    <property type="entry name" value="AMINOTRANSFERASE"/>
    <property type="match status" value="1"/>
</dbReference>
<dbReference type="Pfam" id="PF00202">
    <property type="entry name" value="Aminotran_3"/>
    <property type="match status" value="1"/>
</dbReference>
<dbReference type="PIRSF" id="PIRSF000521">
    <property type="entry name" value="Transaminase_4ab_Lys_Orn"/>
    <property type="match status" value="1"/>
</dbReference>
<dbReference type="SUPFAM" id="SSF53383">
    <property type="entry name" value="PLP-dependent transferases"/>
    <property type="match status" value="1"/>
</dbReference>
<dbReference type="PROSITE" id="PS00600">
    <property type="entry name" value="AA_TRANSFER_CLASS_3"/>
    <property type="match status" value="1"/>
</dbReference>
<protein>
    <recommendedName>
        <fullName evidence="8">L-lysine-epsilon aminotransferase</fullName>
        <shortName>L-lysine aminotransferase</shortName>
        <shortName evidence="8">LAT</shortName>
        <ecNumber evidence="3 4 5 6">2.6.1.36</ecNumber>
    </recommendedName>
    <alternativeName>
        <fullName evidence="7">Lysine 6-aminotransferase</fullName>
    </alternativeName>
</protein>
<reference evidence="14" key="1">
    <citation type="journal article" date="1991" name="J. Bacteriol.">
        <title>Localization of the lysine epsilon-aminotransferase (lat) and delta-(L-alpha-aminoadipyl)-L-cysteinyl-D-valine synthetase (pcbAB) genes from Streptomyces clavuligerus and production of lysine epsilon-aminotransferase activity in Escherichia coli.</title>
        <authorList>
            <person name="Tobin M.B."/>
            <person name="Kovacevic S."/>
            <person name="Madduri K."/>
            <person name="Hoskins J.A."/>
            <person name="Skatrud P.L."/>
            <person name="Vining L.C."/>
            <person name="Stuttard C."/>
            <person name="Miller J.R."/>
        </authorList>
    </citation>
    <scope>NUCLEOTIDE SEQUENCE [GENOMIC DNA]</scope>
    <scope>SUBUNIT</scope>
    <source>
        <strain>ATCC 27064 / DSM 738 / JCM 4710 / NBRC 13307 / NCIMB 12785 / NRRL 3585 / VKM Ac-602</strain>
    </source>
</reference>
<reference evidence="15" key="2">
    <citation type="journal article" date="1994" name="Microbiology">
        <title>Possible involvement of the lysine epsilon-aminotransferase gene (lat) in the expression of the genes encoding ACV synthetase (pcbAB) and isopenicillin N synthase (pcbC) in Streptomyces clavuligerus.</title>
        <authorList>
            <person name="Yu H."/>
            <person name="Serpe E."/>
            <person name="Romero J."/>
            <person name="Coque J.J."/>
            <person name="Maeda K."/>
            <person name="Oelgeschlager M."/>
            <person name="Hintermann G."/>
            <person name="Liras P."/>
            <person name="Martin J.F."/>
            <person name="Demain A.L."/>
            <person name="Piret J."/>
        </authorList>
    </citation>
    <scope>NUCLEOTIDE SEQUENCE [GENOMIC DNA]</scope>
    <source>
        <strain>ATCC 27064 / DSM 738 / JCM 4710 / NBRC 13307 / NCIMB 12785 / NRRL 3585 / VKM Ac-602</strain>
    </source>
</reference>
<reference evidence="16" key="3">
    <citation type="journal article" date="2007" name="J. Agric. Food Chem.">
        <title>Synthesis of 1-piperideine-6-carboxylic acid produced by L-lysine-epsilon-aminotransferase from the Streptomyces clavuligerus gene expressed in Escherichia coli.</title>
        <authorList>
            <person name="Wu M.L."/>
            <person name="Chen J.H."/>
            <person name="Ho C.T."/>
            <person name="Huang T.C."/>
        </authorList>
    </citation>
    <scope>NUCLEOTIDE SEQUENCE [GENOMIC DNA]</scope>
    <scope>FUNCTION</scope>
    <scope>CATALYTIC ACTIVITY</scope>
    <scope>COFACTOR</scope>
    <source>
        <strain>ATCC 27064 / DSM 738 / JCM 4710 / NBRC 13307 / NCIMB 12785 / NRRL 3585 / VKM Ac-602</strain>
    </source>
</reference>
<reference evidence="17" key="4">
    <citation type="journal article" date="2010" name="Genome Biol. Evol.">
        <title>The sequence of a 1.8-mb bacterial linear plasmid reveals a rich evolutionary reservoir of secondary metabolic pathways.</title>
        <authorList>
            <person name="Medema M.H."/>
            <person name="Trefzer A."/>
            <person name="Kovalchuk A."/>
            <person name="van den Berg M."/>
            <person name="Mueller U."/>
            <person name="Heijne W."/>
            <person name="Wu L."/>
            <person name="Alam M.T."/>
            <person name="Ronning C.M."/>
            <person name="Nierman W.C."/>
            <person name="Bovenberg R.A.L."/>
            <person name="Breitling R."/>
            <person name="Takano E."/>
        </authorList>
    </citation>
    <scope>NUCLEOTIDE SEQUENCE [LARGE SCALE GENOMIC DNA]</scope>
    <source>
        <strain>ATCC 27064 / DSM 738 / JCM 4710 / NBRC 13307 / NCIMB 12785 / NRRL 3585 / VKM Ac-602</strain>
    </source>
</reference>
<reference key="5">
    <citation type="journal article" date="1995" name="Appl. Microbiol. Biotechnol.">
        <title>Effects of enhanced lysine epsilon-aminotransferase activity on cephamycin biosynthesis in Streptomyces clavuligerus.</title>
        <authorList>
            <person name="Malmberg L.H."/>
            <person name="Hu W.S."/>
            <person name="Sherman D.H."/>
        </authorList>
    </citation>
    <scope>FUNCTION</scope>
    <scope>CATALYTIC ACTIVITY</scope>
    <scope>PATHWAY</scope>
    <source>
        <strain>ATCC 27064 / DSM 738 / JCM 4710 / NBRC 13307 / NCIMB 12785 / NRRL 3585 / VKM Ac-602</strain>
    </source>
</reference>
<reference key="6">
    <citation type="journal article" date="1996" name="FEMS Microbiol. Lett.">
        <title>Induction of L-lysine epsilon-aminotransferase by L-lysine in Streptomyces clavuligerus, producer of cephalosporins.</title>
        <authorList>
            <person name="Rius N."/>
            <person name="Maeda K."/>
            <person name="Demain A.L."/>
        </authorList>
    </citation>
    <scope>FUNCTION</scope>
    <scope>CATALYTIC ACTIVITY</scope>
    <scope>COFACTOR</scope>
    <scope>ACTIVITY REGULATION</scope>
    <source>
        <strain>ATCC 27064 / DSM 738 / JCM 4710 / NBRC 13307 / NCIMB 12785 / NRRL 3585 / VKM Ac-602</strain>
    </source>
</reference>
<reference key="7">
    <citation type="journal article" date="1997" name="FEMS Microbiol. Lett.">
        <authorList>
            <person name="Rius N."/>
            <person name="Maeda K."/>
            <person name="Demain A.L."/>
        </authorList>
    </citation>
    <scope>ERRATUM OF PUBMED:8900065</scope>
</reference>
<reference key="8">
    <citation type="journal article" date="1997" name="J. Ind. Microbiol. Biotechnol.">
        <title>Partial purification, characterization and nitrogen regulation of the lysine epsilon-aminotransferase of Streptomyces clavuligerus.</title>
        <authorList>
            <person name="Romero J."/>
            <person name="Martin J.F."/>
            <person name="Liras P."/>
            <person name="Demain A.L."/>
            <person name="Rius N."/>
        </authorList>
    </citation>
    <scope>FUNCTION</scope>
    <scope>CATALYTIC ACTIVITY</scope>
    <scope>COFACTOR</scope>
    <scope>ACTIVITY REGULATION</scope>
    <scope>BIOPHYSICOCHEMICAL PROPERTIES</scope>
    <scope>DEVELOPMENTAL STAGE</scope>
    <source>
        <strain>ATCC 27064 / DSM 738 / JCM 4710 / NBRC 13307 / NCIMB 12785 / NRRL 3585 / VKM Ac-602</strain>
    </source>
</reference>
<reference key="9">
    <citation type="journal article" date="2000" name="Microbiology">
        <title>Heterogeneous distribution of lysine 6-aminotransferase during cephamycin C biosynthesis in Streptomyces clavuligerus demonstrated using green fluorescent protein as a reporter.</title>
        <authorList>
            <person name="Khetan A."/>
            <person name="Hu W.S."/>
            <person name="Sherman D.H."/>
        </authorList>
    </citation>
    <scope>DEVELOPMENTAL STAGE</scope>
    <source>
        <strain>ATCC 27064 / DSM 738 / JCM 4710 / NBRC 13307 / NCIMB 12785 / NRRL 3585 / VKM Ac-602</strain>
    </source>
</reference>
<comment type="function">
    <text evidence="3 4 5 6">Catalyzes the transfer of the terminal amino group of L-lysine to alpha-ketoglutarate to yield L-glutamate and 2-aminoadipate 6-semialdehyde ((S)-2-amino-6-oxohexanoate), which is spontaneously converted to the dehydrated form 1-piperideine 6-carboxylate (PubMed:17288446, PubMed:8579831, PubMed:8900065, PubMed:9172431). Shows a high specificity for L-lysine as substrate although L-ornithine can also be used, leading to the formation of an o-aminobenzaldehyde reactive compound (PubMed:9172431). Only cis-oxaloacetate and pyruvate can replace alpha-ketoglutarate, but with very low efficiency (PubMed:9172431).</text>
</comment>
<comment type="catalytic activity">
    <reaction evidence="3 4 5 6">
        <text>L-lysine + 2-oxoglutarate = (S)-2-amino-6-oxohexanoate + L-glutamate</text>
        <dbReference type="Rhea" id="RHEA:21200"/>
        <dbReference type="ChEBI" id="CHEBI:16810"/>
        <dbReference type="ChEBI" id="CHEBI:29985"/>
        <dbReference type="ChEBI" id="CHEBI:32551"/>
        <dbReference type="ChEBI" id="CHEBI:58321"/>
        <dbReference type="EC" id="2.6.1.36"/>
    </reaction>
    <physiologicalReaction direction="left-to-right" evidence="4 6">
        <dbReference type="Rhea" id="RHEA:21201"/>
    </physiologicalReaction>
</comment>
<comment type="cofactor">
    <cofactor evidence="3 5 6">
        <name>pyridoxal 5'-phosphate</name>
        <dbReference type="ChEBI" id="CHEBI:597326"/>
    </cofactor>
</comment>
<comment type="activity regulation">
    <text evidence="5 6">Activity is induced in the presence of high concentrations of lysine, but not by L-alpha-aminoadipic acid (PubMed:8900065). Not repressed by ammonium ions (PubMed:9172431).</text>
</comment>
<comment type="biophysicochemical properties">
    <kinetics>
        <KM evidence="6">3.2 mM for lysine</KM>
        <KM evidence="6">3.6 mM for 2-oxoglutarate</KM>
        <Vmax evidence="6">0.023 nmol/min/mg enzyme toward lysine</Vmax>
        <Vmax evidence="6">0.026 nmol/min/mg enzyme toward 2-oxoglutarate</Vmax>
    </kinetics>
    <phDependence>
        <text evidence="6">Optimum pH is 7.0-7.5.</text>
    </phDependence>
    <temperatureDependence>
        <text evidence="6">Optimum temperature is 30 degrees Celsius.</text>
    </temperatureDependence>
</comment>
<comment type="pathway">
    <text evidence="4 12 13">Antibiotic biosynthesis; cephamycin C biosynthesis.</text>
</comment>
<comment type="subunit">
    <text evidence="10 11">Monomer.</text>
</comment>
<comment type="developmental stage">
    <text evidence="2 6">Activity increases to a maximum during the growth phase and decreases throughout the stationary phase after antibiotic biosynthesis begins (PubMed:10931891, PubMed:9172431). Fusion of LAT with green fluorescent protein (GFP-based reporter system) shows that only a fraction of the mycelia fluoresce in the early growth phase, whereas nearly all hyphae fluoresce by the late growth phase (PubMed:10931891). Thereafter, a non-uniform distribution of fluorescence is again observed in the declining growth phase (PubMed:10931891).</text>
</comment>
<comment type="similarity">
    <text evidence="9">Belongs to the class-III pyridoxal-phosphate-dependent aminotransferase family.</text>
</comment>
<proteinExistence type="evidence at protein level"/>
<evidence type="ECO:0000250" key="1">
    <source>
        <dbReference type="UniProtKB" id="P9WQ77"/>
    </source>
</evidence>
<evidence type="ECO:0000269" key="2">
    <source>
    </source>
</evidence>
<evidence type="ECO:0000269" key="3">
    <source>
    </source>
</evidence>
<evidence type="ECO:0000269" key="4">
    <source>
    </source>
</evidence>
<evidence type="ECO:0000269" key="5">
    <source>
    </source>
</evidence>
<evidence type="ECO:0000269" key="6">
    <source>
    </source>
</evidence>
<evidence type="ECO:0000303" key="7">
    <source>
    </source>
</evidence>
<evidence type="ECO:0000303" key="8">
    <source>
    </source>
</evidence>
<evidence type="ECO:0000305" key="9"/>
<evidence type="ECO:0000305" key="10">
    <source>
    </source>
</evidence>
<evidence type="ECO:0000305" key="11">
    <source>
    </source>
</evidence>
<evidence type="ECO:0000305" key="12">
    <source>
    </source>
</evidence>
<evidence type="ECO:0000305" key="13">
    <source>
    </source>
</evidence>
<evidence type="ECO:0000312" key="14">
    <source>
        <dbReference type="EMBL" id="AAA26777.1"/>
    </source>
</evidence>
<evidence type="ECO:0000312" key="15">
    <source>
        <dbReference type="EMBL" id="AAB39899.1"/>
    </source>
</evidence>
<evidence type="ECO:0000312" key="16">
    <source>
        <dbReference type="EMBL" id="AAU93525.1"/>
    </source>
</evidence>
<evidence type="ECO:0000312" key="17">
    <source>
        <dbReference type="EMBL" id="EFG09276.1"/>
    </source>
</evidence>
<feature type="chain" id="PRO_0000120511" description="L-lysine-epsilon aminotransferase">
    <location>
        <begin position="1"/>
        <end position="457"/>
    </location>
</feature>
<feature type="binding site" evidence="1">
    <location>
        <position position="131"/>
    </location>
    <ligand>
        <name>pyridoxal 5'-phosphate</name>
        <dbReference type="ChEBI" id="CHEBI:597326"/>
    </ligand>
</feature>
<feature type="binding site" evidence="1">
    <location>
        <position position="132"/>
    </location>
    <ligand>
        <name>pyridoxal 5'-phosphate</name>
        <dbReference type="ChEBI" id="CHEBI:597326"/>
    </ligand>
</feature>
<feature type="binding site" evidence="1">
    <location>
        <position position="172"/>
    </location>
    <ligand>
        <name>2-oxoglutarate</name>
        <dbReference type="ChEBI" id="CHEBI:16810"/>
    </ligand>
</feature>
<feature type="binding site" evidence="1">
    <location>
        <position position="172"/>
    </location>
    <ligand>
        <name>L-lysine</name>
        <dbReference type="ChEBI" id="CHEBI:32551"/>
    </ligand>
</feature>
<feature type="binding site" evidence="1">
    <location>
        <position position="278"/>
    </location>
    <ligand>
        <name>2-oxoglutarate</name>
        <dbReference type="ChEBI" id="CHEBI:16810"/>
    </ligand>
</feature>
<feature type="binding site" evidence="1">
    <location>
        <position position="278"/>
    </location>
    <ligand>
        <name>pyridoxal 5'-phosphate</name>
        <dbReference type="ChEBI" id="CHEBI:597326"/>
    </ligand>
</feature>
<feature type="binding site" evidence="1">
    <location>
        <position position="427"/>
    </location>
    <ligand>
        <name>2-oxoglutarate</name>
        <dbReference type="ChEBI" id="CHEBI:16810"/>
    </ligand>
</feature>
<feature type="modified residue" description="N6-(pyridoxal phosphate)lysine" evidence="1">
    <location>
        <position position="304"/>
    </location>
</feature>
<feature type="sequence conflict" description="In Ref. 1; AAA26777." evidence="9" ref="1">
    <original>P</original>
    <variation>R</variation>
    <location>
        <position position="123"/>
    </location>
</feature>
<feature type="sequence conflict" description="In Ref. 1; AAA26777." evidence="9" ref="1">
    <original>A</original>
    <variation>P</variation>
    <location>
        <position position="452"/>
    </location>
</feature>
<name>LAT_STRCL</name>
<sequence>MGEAARHPDGDFSDVGNLHAQDVHQALEQHMLVDGYDLVLDLDASSGVWLVDAVTQKRYLDLFSFFASAPLGINPPSIVEDPAFMRELAVAAVNKPSNPDLYSVPYARFVKTFARVLGDPRLPRLFFVDGGALAVENALKAALDWKAQKLGLAEPDTDRLQVLHLERSFHGRSGYTMSLTNTEPSKTARFPKFGWPRISSPALQHPPAEHTGANQEAERRALEAAREAFAAADGMIACFIAEPIQGEGGDNHLSAEFLQAMQRLCHENDALFVLDEVQSGCGITGTAWAYQQLGLQPDLVAFGKKTQVCGVMGGGRIDEVPENVFAVSSRISSTWGGNLADMVRATRLLETIERTQVFDTVVQRGKYFRDGLEDLAARHPSVVTNARGRGLMCAVDLPDTRTRNEVLRLMYTEHQVIALPCGGRSLRFRPALTIAEHEIDQALQALASSVTAVAESV</sequence>